<name>RR14_CUSOB</name>
<sequence length="100" mass="11953">MARKSLIQRDKKRKKLEQKYHLIRRSSKQEIHKVSLLSEKREFYVKLQSSPRNSAPTRLRRRCFVTGRPRANYRDFELSGHILREMVEACLLPGAIRSSW</sequence>
<reference key="1">
    <citation type="journal article" date="2007" name="BMC Plant Biol.">
        <title>Complete plastid genome sequences suggest strong selection for retention of photosynthetic genes in the parasitic plant genus Cuscuta.</title>
        <authorList>
            <person name="McNeal J.R."/>
            <person name="Kuehl J.V."/>
            <person name="Boore J.L."/>
            <person name="dePamphilis C.W."/>
        </authorList>
    </citation>
    <scope>NUCLEOTIDE SEQUENCE [LARGE SCALE GENOMIC DNA]</scope>
</reference>
<protein>
    <recommendedName>
        <fullName evidence="1">Small ribosomal subunit protein uS14c</fullName>
    </recommendedName>
    <alternativeName>
        <fullName evidence="2">30S ribosomal protein S14, plastid</fullName>
    </alternativeName>
</protein>
<accession>A8W3I5</accession>
<geneLocation type="plastid"/>
<gene>
    <name evidence="1" type="primary">rps14</name>
</gene>
<keyword id="KW-0934">Plastid</keyword>
<keyword id="KW-0687">Ribonucleoprotein</keyword>
<keyword id="KW-0689">Ribosomal protein</keyword>
<keyword id="KW-0694">RNA-binding</keyword>
<keyword id="KW-0699">rRNA-binding</keyword>
<organism>
    <name type="scientific">Cuscuta obtusiflora</name>
    <name type="common">Peruvian dodder</name>
    <dbReference type="NCBI Taxonomy" id="437280"/>
    <lineage>
        <taxon>Eukaryota</taxon>
        <taxon>Viridiplantae</taxon>
        <taxon>Streptophyta</taxon>
        <taxon>Embryophyta</taxon>
        <taxon>Tracheophyta</taxon>
        <taxon>Spermatophyta</taxon>
        <taxon>Magnoliopsida</taxon>
        <taxon>eudicotyledons</taxon>
        <taxon>Gunneridae</taxon>
        <taxon>Pentapetalae</taxon>
        <taxon>asterids</taxon>
        <taxon>lamiids</taxon>
        <taxon>Solanales</taxon>
        <taxon>Convolvulaceae</taxon>
        <taxon>Cuscuteae</taxon>
        <taxon>Cuscuta</taxon>
        <taxon>Cuscuta subgen. Grammica</taxon>
        <taxon>Cuscuta sect. Cleistogrammica</taxon>
    </lineage>
</organism>
<proteinExistence type="inferred from homology"/>
<comment type="function">
    <text evidence="1">Binds 16S rRNA, required for the assembly of 30S particles.</text>
</comment>
<comment type="subunit">
    <text evidence="1">Part of the 30S ribosomal subunit.</text>
</comment>
<comment type="subcellular location">
    <subcellularLocation>
        <location>Plastid</location>
    </subcellularLocation>
</comment>
<comment type="similarity">
    <text evidence="1">Belongs to the universal ribosomal protein uS14 family.</text>
</comment>
<comment type="caution">
    <text evidence="2">Only inflorescences, fruits, starved seedlings and stressed stem tips are green in this organism.</text>
</comment>
<evidence type="ECO:0000255" key="1">
    <source>
        <dbReference type="HAMAP-Rule" id="MF_00537"/>
    </source>
</evidence>
<evidence type="ECO:0000305" key="2"/>
<feature type="chain" id="PRO_0000354412" description="Small ribosomal subunit protein uS14c">
    <location>
        <begin position="1"/>
        <end position="100"/>
    </location>
</feature>
<dbReference type="EMBL" id="EU189133">
    <property type="protein sequence ID" value="ABW20560.1"/>
    <property type="molecule type" value="Genomic_DNA"/>
</dbReference>
<dbReference type="RefSeq" id="YP_001531215.1">
    <property type="nucleotide sequence ID" value="NC_009949.1"/>
</dbReference>
<dbReference type="SMR" id="A8W3I5"/>
<dbReference type="GeneID" id="5714758"/>
<dbReference type="GO" id="GO:0009536">
    <property type="term" value="C:plastid"/>
    <property type="evidence" value="ECO:0007669"/>
    <property type="project" value="UniProtKB-SubCell"/>
</dbReference>
<dbReference type="GO" id="GO:0015935">
    <property type="term" value="C:small ribosomal subunit"/>
    <property type="evidence" value="ECO:0007669"/>
    <property type="project" value="TreeGrafter"/>
</dbReference>
<dbReference type="GO" id="GO:0019843">
    <property type="term" value="F:rRNA binding"/>
    <property type="evidence" value="ECO:0007669"/>
    <property type="project" value="UniProtKB-KW"/>
</dbReference>
<dbReference type="GO" id="GO:0003735">
    <property type="term" value="F:structural constituent of ribosome"/>
    <property type="evidence" value="ECO:0007669"/>
    <property type="project" value="InterPro"/>
</dbReference>
<dbReference type="GO" id="GO:0006412">
    <property type="term" value="P:translation"/>
    <property type="evidence" value="ECO:0007669"/>
    <property type="project" value="InterPro"/>
</dbReference>
<dbReference type="FunFam" id="1.10.287.1480:FF:000001">
    <property type="entry name" value="30S ribosomal protein S14"/>
    <property type="match status" value="1"/>
</dbReference>
<dbReference type="Gene3D" id="1.10.287.1480">
    <property type="match status" value="1"/>
</dbReference>
<dbReference type="HAMAP" id="MF_00537">
    <property type="entry name" value="Ribosomal_uS14_1"/>
    <property type="match status" value="1"/>
</dbReference>
<dbReference type="InterPro" id="IPR001209">
    <property type="entry name" value="Ribosomal_uS14"/>
</dbReference>
<dbReference type="InterPro" id="IPR023036">
    <property type="entry name" value="Ribosomal_uS14_bac/plastid"/>
</dbReference>
<dbReference type="InterPro" id="IPR018271">
    <property type="entry name" value="Ribosomal_uS14_CS"/>
</dbReference>
<dbReference type="NCBIfam" id="NF006477">
    <property type="entry name" value="PRK08881.1"/>
    <property type="match status" value="1"/>
</dbReference>
<dbReference type="PANTHER" id="PTHR19836">
    <property type="entry name" value="30S RIBOSOMAL PROTEIN S14"/>
    <property type="match status" value="1"/>
</dbReference>
<dbReference type="PANTHER" id="PTHR19836:SF19">
    <property type="entry name" value="SMALL RIBOSOMAL SUBUNIT PROTEIN US14M"/>
    <property type="match status" value="1"/>
</dbReference>
<dbReference type="Pfam" id="PF00253">
    <property type="entry name" value="Ribosomal_S14"/>
    <property type="match status" value="1"/>
</dbReference>
<dbReference type="SUPFAM" id="SSF57716">
    <property type="entry name" value="Glucocorticoid receptor-like (DNA-binding domain)"/>
    <property type="match status" value="1"/>
</dbReference>
<dbReference type="PROSITE" id="PS00527">
    <property type="entry name" value="RIBOSOMAL_S14"/>
    <property type="match status" value="1"/>
</dbReference>